<sequence>MSTSTAAPAPSLSDLCPAALRRPVAAALRALDPAPARLAVAVSGGADSAMLAVAAAAVLPPGCTLRLFHVHHGLQAAADQWAAQVRGLGALLGVPVDEARVTVPPGQGLGMEAAARLARYQALAGLARQHGVRHILLAHHRNDQAETVLLRLLRGTGLQGMAAMAPLSERDGVAYLRPWLDVDRAAILALAGAVRAQCGWQAVQDPTNTDPRYARAAVRTQLAPALDARWPGWQAIVARHARQMAEAAEIVAEVARADFDTLEPADAGRSFSLAAWRGLSAARQAQALRHWLASQDAPMPTEARLAELQRQLRQLHALGHDRHLRWQHAGRVVRCERGRVWIDD</sequence>
<feature type="chain" id="PRO_0000181659" description="tRNA(Ile)-lysidine synthase">
    <location>
        <begin position="1"/>
        <end position="344"/>
    </location>
</feature>
<feature type="binding site" evidence="1">
    <location>
        <begin position="43"/>
        <end position="48"/>
    </location>
    <ligand>
        <name>ATP</name>
        <dbReference type="ChEBI" id="CHEBI:30616"/>
    </ligand>
</feature>
<proteinExistence type="inferred from homology"/>
<protein>
    <recommendedName>
        <fullName evidence="1">tRNA(Ile)-lysidine synthase</fullName>
        <ecNumber evidence="1">6.3.4.19</ecNumber>
    </recommendedName>
    <alternativeName>
        <fullName evidence="1">tRNA(Ile)-2-lysyl-cytidine synthase</fullName>
    </alternativeName>
    <alternativeName>
        <fullName evidence="1">tRNA(Ile)-lysidine synthetase</fullName>
    </alternativeName>
</protein>
<evidence type="ECO:0000255" key="1">
    <source>
        <dbReference type="HAMAP-Rule" id="MF_01161"/>
    </source>
</evidence>
<gene>
    <name evidence="1" type="primary">tilS</name>
    <name type="ordered locus">BPP2286</name>
</gene>
<reference key="1">
    <citation type="journal article" date="2003" name="Nat. Genet.">
        <title>Comparative analysis of the genome sequences of Bordetella pertussis, Bordetella parapertussis and Bordetella bronchiseptica.</title>
        <authorList>
            <person name="Parkhill J."/>
            <person name="Sebaihia M."/>
            <person name="Preston A."/>
            <person name="Murphy L.D."/>
            <person name="Thomson N.R."/>
            <person name="Harris D.E."/>
            <person name="Holden M.T.G."/>
            <person name="Churcher C.M."/>
            <person name="Bentley S.D."/>
            <person name="Mungall K.L."/>
            <person name="Cerdeno-Tarraga A.-M."/>
            <person name="Temple L."/>
            <person name="James K.D."/>
            <person name="Harris B."/>
            <person name="Quail M.A."/>
            <person name="Achtman M."/>
            <person name="Atkin R."/>
            <person name="Baker S."/>
            <person name="Basham D."/>
            <person name="Bason N."/>
            <person name="Cherevach I."/>
            <person name="Chillingworth T."/>
            <person name="Collins M."/>
            <person name="Cronin A."/>
            <person name="Davis P."/>
            <person name="Doggett J."/>
            <person name="Feltwell T."/>
            <person name="Goble A."/>
            <person name="Hamlin N."/>
            <person name="Hauser H."/>
            <person name="Holroyd S."/>
            <person name="Jagels K."/>
            <person name="Leather S."/>
            <person name="Moule S."/>
            <person name="Norberczak H."/>
            <person name="O'Neil S."/>
            <person name="Ormond D."/>
            <person name="Price C."/>
            <person name="Rabbinowitsch E."/>
            <person name="Rutter S."/>
            <person name="Sanders M."/>
            <person name="Saunders D."/>
            <person name="Seeger K."/>
            <person name="Sharp S."/>
            <person name="Simmonds M."/>
            <person name="Skelton J."/>
            <person name="Squares R."/>
            <person name="Squares S."/>
            <person name="Stevens K."/>
            <person name="Unwin L."/>
            <person name="Whitehead S."/>
            <person name="Barrell B.G."/>
            <person name="Maskell D.J."/>
        </authorList>
    </citation>
    <scope>NUCLEOTIDE SEQUENCE [LARGE SCALE GENOMIC DNA]</scope>
    <source>
        <strain>12822 / ATCC BAA-587 / NCTC 13253</strain>
    </source>
</reference>
<keyword id="KW-0067">ATP-binding</keyword>
<keyword id="KW-0963">Cytoplasm</keyword>
<keyword id="KW-0436">Ligase</keyword>
<keyword id="KW-0547">Nucleotide-binding</keyword>
<keyword id="KW-0819">tRNA processing</keyword>
<dbReference type="EC" id="6.3.4.19" evidence="1"/>
<dbReference type="EMBL" id="BX640429">
    <property type="protein sequence ID" value="CAE37584.1"/>
    <property type="molecule type" value="Genomic_DNA"/>
</dbReference>
<dbReference type="SMR" id="Q7W859"/>
<dbReference type="KEGG" id="bpa:BPP2286"/>
<dbReference type="HOGENOM" id="CLU_018869_2_1_4"/>
<dbReference type="Proteomes" id="UP000001421">
    <property type="component" value="Chromosome"/>
</dbReference>
<dbReference type="GO" id="GO:0005737">
    <property type="term" value="C:cytoplasm"/>
    <property type="evidence" value="ECO:0007669"/>
    <property type="project" value="UniProtKB-SubCell"/>
</dbReference>
<dbReference type="GO" id="GO:0005524">
    <property type="term" value="F:ATP binding"/>
    <property type="evidence" value="ECO:0007669"/>
    <property type="project" value="UniProtKB-UniRule"/>
</dbReference>
<dbReference type="GO" id="GO:0032267">
    <property type="term" value="F:tRNA(Ile)-lysidine synthase activity"/>
    <property type="evidence" value="ECO:0007669"/>
    <property type="project" value="UniProtKB-EC"/>
</dbReference>
<dbReference type="GO" id="GO:0006400">
    <property type="term" value="P:tRNA modification"/>
    <property type="evidence" value="ECO:0007669"/>
    <property type="project" value="UniProtKB-UniRule"/>
</dbReference>
<dbReference type="CDD" id="cd01992">
    <property type="entry name" value="TilS_N"/>
    <property type="match status" value="1"/>
</dbReference>
<dbReference type="Gene3D" id="1.20.59.20">
    <property type="match status" value="1"/>
</dbReference>
<dbReference type="Gene3D" id="3.40.50.620">
    <property type="entry name" value="HUPs"/>
    <property type="match status" value="1"/>
</dbReference>
<dbReference type="HAMAP" id="MF_01161">
    <property type="entry name" value="tRNA_Ile_lys_synt"/>
    <property type="match status" value="1"/>
</dbReference>
<dbReference type="InterPro" id="IPR014729">
    <property type="entry name" value="Rossmann-like_a/b/a_fold"/>
</dbReference>
<dbReference type="InterPro" id="IPR011063">
    <property type="entry name" value="TilS/TtcA_N"/>
</dbReference>
<dbReference type="InterPro" id="IPR012094">
    <property type="entry name" value="tRNA_Ile_lys_synt"/>
</dbReference>
<dbReference type="InterPro" id="IPR012795">
    <property type="entry name" value="tRNA_Ile_lys_synt_N"/>
</dbReference>
<dbReference type="InterPro" id="IPR015262">
    <property type="entry name" value="tRNA_Ile_lys_synt_subst-bd"/>
</dbReference>
<dbReference type="NCBIfam" id="TIGR02432">
    <property type="entry name" value="lysidine_TilS_N"/>
    <property type="match status" value="1"/>
</dbReference>
<dbReference type="PANTHER" id="PTHR43033">
    <property type="entry name" value="TRNA(ILE)-LYSIDINE SYNTHASE-RELATED"/>
    <property type="match status" value="1"/>
</dbReference>
<dbReference type="PANTHER" id="PTHR43033:SF1">
    <property type="entry name" value="TRNA(ILE)-LYSIDINE SYNTHASE-RELATED"/>
    <property type="match status" value="1"/>
</dbReference>
<dbReference type="Pfam" id="PF01171">
    <property type="entry name" value="ATP_bind_3"/>
    <property type="match status" value="1"/>
</dbReference>
<dbReference type="Pfam" id="PF09179">
    <property type="entry name" value="TilS"/>
    <property type="match status" value="1"/>
</dbReference>
<dbReference type="SUPFAM" id="SSF52402">
    <property type="entry name" value="Adenine nucleotide alpha hydrolases-like"/>
    <property type="match status" value="1"/>
</dbReference>
<dbReference type="SUPFAM" id="SSF82829">
    <property type="entry name" value="MesJ substrate recognition domain-like"/>
    <property type="match status" value="1"/>
</dbReference>
<comment type="function">
    <text evidence="1">Ligates lysine onto the cytidine present at position 34 of the AUA codon-specific tRNA(Ile) that contains the anticodon CAU, in an ATP-dependent manner. Cytidine is converted to lysidine, thus changing the amino acid specificity of the tRNA from methionine to isoleucine.</text>
</comment>
<comment type="catalytic activity">
    <reaction evidence="1">
        <text>cytidine(34) in tRNA(Ile2) + L-lysine + ATP = lysidine(34) in tRNA(Ile2) + AMP + diphosphate + H(+)</text>
        <dbReference type="Rhea" id="RHEA:43744"/>
        <dbReference type="Rhea" id="RHEA-COMP:10625"/>
        <dbReference type="Rhea" id="RHEA-COMP:10670"/>
        <dbReference type="ChEBI" id="CHEBI:15378"/>
        <dbReference type="ChEBI" id="CHEBI:30616"/>
        <dbReference type="ChEBI" id="CHEBI:32551"/>
        <dbReference type="ChEBI" id="CHEBI:33019"/>
        <dbReference type="ChEBI" id="CHEBI:82748"/>
        <dbReference type="ChEBI" id="CHEBI:83665"/>
        <dbReference type="ChEBI" id="CHEBI:456215"/>
        <dbReference type="EC" id="6.3.4.19"/>
    </reaction>
</comment>
<comment type="subcellular location">
    <subcellularLocation>
        <location evidence="1">Cytoplasm</location>
    </subcellularLocation>
</comment>
<comment type="domain">
    <text>The N-terminal region contains the highly conserved SGGXDS motif, predicted to be a P-loop motif involved in ATP binding.</text>
</comment>
<comment type="similarity">
    <text evidence="1">Belongs to the tRNA(Ile)-lysidine synthase family.</text>
</comment>
<name>TILS_BORPA</name>
<accession>Q7W859</accession>
<organism>
    <name type="scientific">Bordetella parapertussis (strain 12822 / ATCC BAA-587 / NCTC 13253)</name>
    <dbReference type="NCBI Taxonomy" id="257311"/>
    <lineage>
        <taxon>Bacteria</taxon>
        <taxon>Pseudomonadati</taxon>
        <taxon>Pseudomonadota</taxon>
        <taxon>Betaproteobacteria</taxon>
        <taxon>Burkholderiales</taxon>
        <taxon>Alcaligenaceae</taxon>
        <taxon>Bordetella</taxon>
    </lineage>
</organism>